<reference key="1">
    <citation type="journal article" date="2005" name="Nature">
        <title>The genome sequence of the rice blast fungus Magnaporthe grisea.</title>
        <authorList>
            <person name="Dean R.A."/>
            <person name="Talbot N.J."/>
            <person name="Ebbole D.J."/>
            <person name="Farman M.L."/>
            <person name="Mitchell T.K."/>
            <person name="Orbach M.J."/>
            <person name="Thon M.R."/>
            <person name="Kulkarni R."/>
            <person name="Xu J.-R."/>
            <person name="Pan H."/>
            <person name="Read N.D."/>
            <person name="Lee Y.-H."/>
            <person name="Carbone I."/>
            <person name="Brown D."/>
            <person name="Oh Y.Y."/>
            <person name="Donofrio N."/>
            <person name="Jeong J.S."/>
            <person name="Soanes D.M."/>
            <person name="Djonovic S."/>
            <person name="Kolomiets E."/>
            <person name="Rehmeyer C."/>
            <person name="Li W."/>
            <person name="Harding M."/>
            <person name="Kim S."/>
            <person name="Lebrun M.-H."/>
            <person name="Bohnert H."/>
            <person name="Coughlan S."/>
            <person name="Butler J."/>
            <person name="Calvo S.E."/>
            <person name="Ma L.-J."/>
            <person name="Nicol R."/>
            <person name="Purcell S."/>
            <person name="Nusbaum C."/>
            <person name="Galagan J.E."/>
            <person name="Birren B.W."/>
        </authorList>
    </citation>
    <scope>NUCLEOTIDE SEQUENCE [LARGE SCALE GENOMIC DNA]</scope>
    <source>
        <strain>70-15 / ATCC MYA-4617 / FGSC 8958</strain>
    </source>
</reference>
<feature type="signal peptide" evidence="2">
    <location>
        <begin position="1"/>
        <end position="21"/>
    </location>
</feature>
<feature type="chain" id="PRO_0000411760" description="Probable zinc metalloprotease MGG_02107">
    <location>
        <begin position="22"/>
        <end position="502"/>
    </location>
</feature>
<feature type="domain" description="Fibronectin type-III" evidence="3">
    <location>
        <begin position="414"/>
        <end position="502"/>
    </location>
</feature>
<feature type="region of interest" description="Disordered" evidence="4">
    <location>
        <begin position="284"/>
        <end position="307"/>
    </location>
</feature>
<feature type="binding site" evidence="1">
    <location>
        <position position="182"/>
    </location>
    <ligand>
        <name>Zn(2+)</name>
        <dbReference type="ChEBI" id="CHEBI:29105"/>
        <label>1</label>
    </ligand>
</feature>
<feature type="binding site" evidence="1">
    <location>
        <position position="202"/>
    </location>
    <ligand>
        <name>Zn(2+)</name>
        <dbReference type="ChEBI" id="CHEBI:29105"/>
        <label>1</label>
    </ligand>
</feature>
<feature type="binding site" evidence="1">
    <location>
        <position position="202"/>
    </location>
    <ligand>
        <name>Zn(2+)</name>
        <dbReference type="ChEBI" id="CHEBI:29105"/>
        <label>2</label>
        <note>catalytic</note>
    </ligand>
</feature>
<feature type="binding site" evidence="1">
    <location>
        <position position="235"/>
    </location>
    <ligand>
        <name>Zn(2+)</name>
        <dbReference type="ChEBI" id="CHEBI:29105"/>
        <label>2</label>
        <note>catalytic</note>
    </ligand>
</feature>
<feature type="binding site" evidence="1">
    <location>
        <position position="262"/>
    </location>
    <ligand>
        <name>Zn(2+)</name>
        <dbReference type="ChEBI" id="CHEBI:29105"/>
        <label>1</label>
    </ligand>
</feature>
<feature type="glycosylation site" description="N-linked (GlcNAc...) asparagine" evidence="2">
    <location>
        <position position="250"/>
    </location>
</feature>
<feature type="glycosylation site" description="N-linked (GlcNAc...) asparagine" evidence="2">
    <location>
        <position position="375"/>
    </location>
</feature>
<feature type="glycosylation site" description="N-linked (GlcNAc...) asparagine" evidence="2">
    <location>
        <position position="417"/>
    </location>
</feature>
<feature type="glycosylation site" description="N-linked (GlcNAc...) asparagine" evidence="2">
    <location>
        <position position="427"/>
    </location>
</feature>
<evidence type="ECO:0000250" key="1"/>
<evidence type="ECO:0000255" key="2"/>
<evidence type="ECO:0000255" key="3">
    <source>
        <dbReference type="PROSITE-ProRule" id="PRU00316"/>
    </source>
</evidence>
<evidence type="ECO:0000256" key="4">
    <source>
        <dbReference type="SAM" id="MobiDB-lite"/>
    </source>
</evidence>
<evidence type="ECO:0000305" key="5"/>
<accession>A4R017</accession>
<accession>G4MNP9</accession>
<dbReference type="EC" id="3.4.-.-"/>
<dbReference type="EMBL" id="CM001231">
    <property type="protein sequence ID" value="EHA56265.1"/>
    <property type="molecule type" value="Genomic_DNA"/>
</dbReference>
<dbReference type="RefSeq" id="XP_003708877.1">
    <property type="nucleotide sequence ID" value="XM_003708829.1"/>
</dbReference>
<dbReference type="SMR" id="A4R017"/>
<dbReference type="EnsemblFungi" id="MGG_16033T0">
    <property type="protein sequence ID" value="MGG_16033T0"/>
    <property type="gene ID" value="MGG_16033"/>
</dbReference>
<dbReference type="KEGG" id="mgr:MGG_16033"/>
<dbReference type="VEuPathDB" id="FungiDB:MGG_16033"/>
<dbReference type="eggNOG" id="ENOG502R701">
    <property type="taxonomic scope" value="Eukaryota"/>
</dbReference>
<dbReference type="HOGENOM" id="CLU_047420_0_0_1"/>
<dbReference type="InParanoid" id="A4R017"/>
<dbReference type="OMA" id="NNDMIGN"/>
<dbReference type="OrthoDB" id="10013407at2759"/>
<dbReference type="Proteomes" id="UP000009058">
    <property type="component" value="Chromosome 1"/>
</dbReference>
<dbReference type="GO" id="GO:0005576">
    <property type="term" value="C:extracellular region"/>
    <property type="evidence" value="ECO:0007669"/>
    <property type="project" value="UniProtKB-SubCell"/>
</dbReference>
<dbReference type="GO" id="GO:0046872">
    <property type="term" value="F:metal ion binding"/>
    <property type="evidence" value="ECO:0007669"/>
    <property type="project" value="UniProtKB-KW"/>
</dbReference>
<dbReference type="GO" id="GO:0008235">
    <property type="term" value="F:metalloexopeptidase activity"/>
    <property type="evidence" value="ECO:0007669"/>
    <property type="project" value="InterPro"/>
</dbReference>
<dbReference type="GO" id="GO:0006508">
    <property type="term" value="P:proteolysis"/>
    <property type="evidence" value="ECO:0007669"/>
    <property type="project" value="UniProtKB-KW"/>
</dbReference>
<dbReference type="CDD" id="cd05642">
    <property type="entry name" value="M28_like"/>
    <property type="match status" value="1"/>
</dbReference>
<dbReference type="Gene3D" id="3.40.630.10">
    <property type="entry name" value="Zn peptidases"/>
    <property type="match status" value="1"/>
</dbReference>
<dbReference type="InterPro" id="IPR003961">
    <property type="entry name" value="FN3_dom"/>
</dbReference>
<dbReference type="InterPro" id="IPR045175">
    <property type="entry name" value="M28_fam"/>
</dbReference>
<dbReference type="InterPro" id="IPR007484">
    <property type="entry name" value="Peptidase_M28"/>
</dbReference>
<dbReference type="PANTHER" id="PTHR12147">
    <property type="entry name" value="METALLOPEPTIDASE M28 FAMILY MEMBER"/>
    <property type="match status" value="1"/>
</dbReference>
<dbReference type="PANTHER" id="PTHR12147:SF26">
    <property type="entry name" value="PEPTIDASE M28 DOMAIN-CONTAINING PROTEIN"/>
    <property type="match status" value="1"/>
</dbReference>
<dbReference type="Pfam" id="PF04389">
    <property type="entry name" value="Peptidase_M28"/>
    <property type="match status" value="1"/>
</dbReference>
<dbReference type="SUPFAM" id="SSF53187">
    <property type="entry name" value="Zn-dependent exopeptidases"/>
    <property type="match status" value="1"/>
</dbReference>
<dbReference type="PROSITE" id="PS50853">
    <property type="entry name" value="FN3"/>
    <property type="match status" value="1"/>
</dbReference>
<protein>
    <recommendedName>
        <fullName>Probable zinc metalloprotease MGG_02107</fullName>
        <ecNumber>3.4.-.-</ecNumber>
    </recommendedName>
</protein>
<sequence length="502" mass="52930">MRSPPGAVAALASVAAQLATAALVPRDAAAPTTAAMPLPFPAQVGIDDSNLATCANANWPPPSSPVGEVISAQLPDADLQAALGEVDPARIRAIVDKLVGFGTRHTLSTQTDPTRGIGAARDWIAEEMRGYAATAGGRMEVTVPGYVQGVASRISFPVKISNVVATLKGDKDPDRVYVVSGHYDSRVTDVMNYEADAPGANDDASGVALAMELARIFATRRPAATIVFTAVAGEEQGLYGSAFMAQTYRNASVNVEGVLNNDIIGSSTGSRGEKDPHTVRVFCQGGSPAGESKERAETRASIGGENDSPARELGRFIAEVGGNAFTDMKVALVYRLDRYLRGGDHRSFLDAGYGSAVRFTEPNEDFNHQHQDVRNATDGTVLGDLAEFVDYDYVARVAKVNLAAAWSLANAPPQVRNVTVDTSTLSNDSGLSWAKIAGAGAALVKGYEVVWRPTTASLWTHQLYVGDVASFRVPLTKDNVIFGVRSVGLNGYKSPATMPFPG</sequence>
<organism>
    <name type="scientific">Pyricularia oryzae (strain 70-15 / ATCC MYA-4617 / FGSC 8958)</name>
    <name type="common">Rice blast fungus</name>
    <name type="synonym">Magnaporthe oryzae</name>
    <dbReference type="NCBI Taxonomy" id="242507"/>
    <lineage>
        <taxon>Eukaryota</taxon>
        <taxon>Fungi</taxon>
        <taxon>Dikarya</taxon>
        <taxon>Ascomycota</taxon>
        <taxon>Pezizomycotina</taxon>
        <taxon>Sordariomycetes</taxon>
        <taxon>Sordariomycetidae</taxon>
        <taxon>Magnaporthales</taxon>
        <taxon>Pyriculariaceae</taxon>
        <taxon>Pyricularia</taxon>
    </lineage>
</organism>
<comment type="cofactor">
    <cofactor evidence="1">
        <name>Zn(2+)</name>
        <dbReference type="ChEBI" id="CHEBI:29105"/>
    </cofactor>
    <text evidence="1">Binds 2 Zn(2+) ions per subunit.</text>
</comment>
<comment type="subcellular location">
    <subcellularLocation>
        <location evidence="5">Secreted</location>
    </subcellularLocation>
</comment>
<comment type="similarity">
    <text evidence="5">Belongs to the peptidase M28 family. M28B subfamily.</text>
</comment>
<proteinExistence type="inferred from homology"/>
<name>M28P2_PYRO7</name>
<gene>
    <name type="ORF">MGG_02107</name>
</gene>
<keyword id="KW-0325">Glycoprotein</keyword>
<keyword id="KW-0378">Hydrolase</keyword>
<keyword id="KW-0479">Metal-binding</keyword>
<keyword id="KW-0482">Metalloprotease</keyword>
<keyword id="KW-0645">Protease</keyword>
<keyword id="KW-1185">Reference proteome</keyword>
<keyword id="KW-0964">Secreted</keyword>
<keyword id="KW-0732">Signal</keyword>
<keyword id="KW-0862">Zinc</keyword>